<organism>
    <name type="scientific">Clostridium perfringens (strain SM101 / Type A)</name>
    <dbReference type="NCBI Taxonomy" id="289380"/>
    <lineage>
        <taxon>Bacteria</taxon>
        <taxon>Bacillati</taxon>
        <taxon>Bacillota</taxon>
        <taxon>Clostridia</taxon>
        <taxon>Eubacteriales</taxon>
        <taxon>Clostridiaceae</taxon>
        <taxon>Clostridium</taxon>
    </lineage>
</organism>
<feature type="chain" id="PRO_1000017658" description="Adenosine deaminase">
    <location>
        <begin position="1"/>
        <end position="332"/>
    </location>
</feature>
<feature type="active site" description="Proton donor" evidence="1">
    <location>
        <position position="200"/>
    </location>
</feature>
<feature type="binding site" evidence="1">
    <location>
        <position position="12"/>
    </location>
    <ligand>
        <name>Zn(2+)</name>
        <dbReference type="ChEBI" id="CHEBI:29105"/>
        <note>catalytic</note>
    </ligand>
</feature>
<feature type="binding site" evidence="1">
    <location>
        <position position="14"/>
    </location>
    <ligand>
        <name>substrate</name>
    </ligand>
</feature>
<feature type="binding site" evidence="1">
    <location>
        <position position="14"/>
    </location>
    <ligand>
        <name>Zn(2+)</name>
        <dbReference type="ChEBI" id="CHEBI:29105"/>
        <note>catalytic</note>
    </ligand>
</feature>
<feature type="binding site" evidence="1">
    <location>
        <position position="16"/>
    </location>
    <ligand>
        <name>substrate</name>
    </ligand>
</feature>
<feature type="binding site" evidence="1">
    <location>
        <position position="170"/>
    </location>
    <ligand>
        <name>substrate</name>
    </ligand>
</feature>
<feature type="binding site" evidence="1">
    <location>
        <position position="197"/>
    </location>
    <ligand>
        <name>Zn(2+)</name>
        <dbReference type="ChEBI" id="CHEBI:29105"/>
        <note>catalytic</note>
    </ligand>
</feature>
<feature type="binding site" evidence="1">
    <location>
        <position position="278"/>
    </location>
    <ligand>
        <name>Zn(2+)</name>
        <dbReference type="ChEBI" id="CHEBI:29105"/>
        <note>catalytic</note>
    </ligand>
</feature>
<feature type="site" description="Important for catalytic activity" evidence="1">
    <location>
        <position position="221"/>
    </location>
</feature>
<comment type="function">
    <text evidence="1">Catalyzes the hydrolytic deamination of adenosine and 2-deoxyadenosine.</text>
</comment>
<comment type="catalytic activity">
    <reaction evidence="1">
        <text>adenosine + H2O + H(+) = inosine + NH4(+)</text>
        <dbReference type="Rhea" id="RHEA:24408"/>
        <dbReference type="ChEBI" id="CHEBI:15377"/>
        <dbReference type="ChEBI" id="CHEBI:15378"/>
        <dbReference type="ChEBI" id="CHEBI:16335"/>
        <dbReference type="ChEBI" id="CHEBI:17596"/>
        <dbReference type="ChEBI" id="CHEBI:28938"/>
        <dbReference type="EC" id="3.5.4.4"/>
    </reaction>
    <physiologicalReaction direction="left-to-right" evidence="1">
        <dbReference type="Rhea" id="RHEA:24409"/>
    </physiologicalReaction>
</comment>
<comment type="catalytic activity">
    <reaction evidence="1">
        <text>2'-deoxyadenosine + H2O + H(+) = 2'-deoxyinosine + NH4(+)</text>
        <dbReference type="Rhea" id="RHEA:28190"/>
        <dbReference type="ChEBI" id="CHEBI:15377"/>
        <dbReference type="ChEBI" id="CHEBI:15378"/>
        <dbReference type="ChEBI" id="CHEBI:17256"/>
        <dbReference type="ChEBI" id="CHEBI:28938"/>
        <dbReference type="ChEBI" id="CHEBI:28997"/>
        <dbReference type="EC" id="3.5.4.4"/>
    </reaction>
    <physiologicalReaction direction="left-to-right" evidence="1">
        <dbReference type="Rhea" id="RHEA:28191"/>
    </physiologicalReaction>
</comment>
<comment type="cofactor">
    <cofactor evidence="1">
        <name>Zn(2+)</name>
        <dbReference type="ChEBI" id="CHEBI:29105"/>
    </cofactor>
    <text evidence="1">Binds 1 zinc ion per subunit.</text>
</comment>
<comment type="similarity">
    <text evidence="1">Belongs to the metallo-dependent hydrolases superfamily. Adenosine and AMP deaminases family. Adenosine deaminase subfamily.</text>
</comment>
<name>ADD_CLOPS</name>
<reference key="1">
    <citation type="journal article" date="2006" name="Genome Res.">
        <title>Skewed genomic variability in strains of the toxigenic bacterial pathogen, Clostridium perfringens.</title>
        <authorList>
            <person name="Myers G.S.A."/>
            <person name="Rasko D.A."/>
            <person name="Cheung J.K."/>
            <person name="Ravel J."/>
            <person name="Seshadri R."/>
            <person name="DeBoy R.T."/>
            <person name="Ren Q."/>
            <person name="Varga J."/>
            <person name="Awad M.M."/>
            <person name="Brinkac L.M."/>
            <person name="Daugherty S.C."/>
            <person name="Haft D.H."/>
            <person name="Dodson R.J."/>
            <person name="Madupu R."/>
            <person name="Nelson W.C."/>
            <person name="Rosovitz M.J."/>
            <person name="Sullivan S.A."/>
            <person name="Khouri H."/>
            <person name="Dimitrov G.I."/>
            <person name="Watkins K.L."/>
            <person name="Mulligan S."/>
            <person name="Benton J."/>
            <person name="Radune D."/>
            <person name="Fisher D.J."/>
            <person name="Atkins H.S."/>
            <person name="Hiscox T."/>
            <person name="Jost B.H."/>
            <person name="Billington S.J."/>
            <person name="Songer J.G."/>
            <person name="McClane B.A."/>
            <person name="Titball R.W."/>
            <person name="Rood J.I."/>
            <person name="Melville S.B."/>
            <person name="Paulsen I.T."/>
        </authorList>
    </citation>
    <scope>NUCLEOTIDE SEQUENCE [LARGE SCALE GENOMIC DNA]</scope>
    <source>
        <strain>SM101 / Type A</strain>
    </source>
</reference>
<proteinExistence type="inferred from homology"/>
<accession>Q0SQ45</accession>
<gene>
    <name evidence="1" type="primary">add</name>
    <name type="ordered locus">CPR_2515</name>
</gene>
<sequence length="332" mass="38086">MNLLNLPKIELHCHLDGSLRVETAIELAKKEGIKLHSYEYDKVKELLVISKECNSLEDYLNRFALPAKLLQRPENLERVAFELMEDASKENVKYIEIRFAPLLHLEKGMTQKEVIESVIKGIRKAEEFYDIKGNLILSCLRHHSIDSVYEVIEEGKNFIGKGVVAIDLAGGELEGFVKPYKEVMKLARESGFRVTIHAGETGYGKNVRDAIELLGAERIGHGLFIFNDEEAYNLVKEKGVTLEMCPKSNIDTKGVNKYEEHPIYKYHKDNIRVNLSTDNRTVSNINLTEEFENVHKTFNIDFEDYKKIYLNSVEASFCSEELKEKLKLSIII</sequence>
<dbReference type="EC" id="3.5.4.4" evidence="1"/>
<dbReference type="EMBL" id="CP000312">
    <property type="protein sequence ID" value="ABG85954.1"/>
    <property type="molecule type" value="Genomic_DNA"/>
</dbReference>
<dbReference type="RefSeq" id="WP_011593208.1">
    <property type="nucleotide sequence ID" value="NC_008262.1"/>
</dbReference>
<dbReference type="SMR" id="Q0SQ45"/>
<dbReference type="KEGG" id="cpr:CPR_2515"/>
<dbReference type="Proteomes" id="UP000001824">
    <property type="component" value="Chromosome"/>
</dbReference>
<dbReference type="GO" id="GO:0005829">
    <property type="term" value="C:cytosol"/>
    <property type="evidence" value="ECO:0007669"/>
    <property type="project" value="TreeGrafter"/>
</dbReference>
<dbReference type="GO" id="GO:0046936">
    <property type="term" value="F:2'-deoxyadenosine deaminase activity"/>
    <property type="evidence" value="ECO:0007669"/>
    <property type="project" value="RHEA"/>
</dbReference>
<dbReference type="GO" id="GO:0004000">
    <property type="term" value="F:adenosine deaminase activity"/>
    <property type="evidence" value="ECO:0007669"/>
    <property type="project" value="UniProtKB-UniRule"/>
</dbReference>
<dbReference type="GO" id="GO:0008270">
    <property type="term" value="F:zinc ion binding"/>
    <property type="evidence" value="ECO:0007669"/>
    <property type="project" value="UniProtKB-UniRule"/>
</dbReference>
<dbReference type="GO" id="GO:0006154">
    <property type="term" value="P:adenosine catabolic process"/>
    <property type="evidence" value="ECO:0007669"/>
    <property type="project" value="TreeGrafter"/>
</dbReference>
<dbReference type="GO" id="GO:0043103">
    <property type="term" value="P:hypoxanthine salvage"/>
    <property type="evidence" value="ECO:0007669"/>
    <property type="project" value="TreeGrafter"/>
</dbReference>
<dbReference type="GO" id="GO:0046103">
    <property type="term" value="P:inosine biosynthetic process"/>
    <property type="evidence" value="ECO:0007669"/>
    <property type="project" value="TreeGrafter"/>
</dbReference>
<dbReference type="GO" id="GO:0009117">
    <property type="term" value="P:nucleotide metabolic process"/>
    <property type="evidence" value="ECO:0007669"/>
    <property type="project" value="UniProtKB-KW"/>
</dbReference>
<dbReference type="GO" id="GO:0009168">
    <property type="term" value="P:purine ribonucleoside monophosphate biosynthetic process"/>
    <property type="evidence" value="ECO:0007669"/>
    <property type="project" value="UniProtKB-UniRule"/>
</dbReference>
<dbReference type="CDD" id="cd01320">
    <property type="entry name" value="ADA"/>
    <property type="match status" value="1"/>
</dbReference>
<dbReference type="Gene3D" id="3.20.20.140">
    <property type="entry name" value="Metal-dependent hydrolases"/>
    <property type="match status" value="1"/>
</dbReference>
<dbReference type="HAMAP" id="MF_00540">
    <property type="entry name" value="A_deaminase"/>
    <property type="match status" value="1"/>
</dbReference>
<dbReference type="InterPro" id="IPR028893">
    <property type="entry name" value="A_deaminase"/>
</dbReference>
<dbReference type="InterPro" id="IPR001365">
    <property type="entry name" value="A_deaminase_dom"/>
</dbReference>
<dbReference type="InterPro" id="IPR006330">
    <property type="entry name" value="Ado/ade_deaminase"/>
</dbReference>
<dbReference type="InterPro" id="IPR032466">
    <property type="entry name" value="Metal_Hydrolase"/>
</dbReference>
<dbReference type="NCBIfam" id="TIGR01430">
    <property type="entry name" value="aden_deam"/>
    <property type="match status" value="1"/>
</dbReference>
<dbReference type="PANTHER" id="PTHR11409">
    <property type="entry name" value="ADENOSINE DEAMINASE"/>
    <property type="match status" value="1"/>
</dbReference>
<dbReference type="PANTHER" id="PTHR11409:SF43">
    <property type="entry name" value="ADENOSINE DEAMINASE"/>
    <property type="match status" value="1"/>
</dbReference>
<dbReference type="Pfam" id="PF00962">
    <property type="entry name" value="A_deaminase"/>
    <property type="match status" value="1"/>
</dbReference>
<dbReference type="SUPFAM" id="SSF51556">
    <property type="entry name" value="Metallo-dependent hydrolases"/>
    <property type="match status" value="1"/>
</dbReference>
<evidence type="ECO:0000255" key="1">
    <source>
        <dbReference type="HAMAP-Rule" id="MF_00540"/>
    </source>
</evidence>
<keyword id="KW-0378">Hydrolase</keyword>
<keyword id="KW-0479">Metal-binding</keyword>
<keyword id="KW-0546">Nucleotide metabolism</keyword>
<keyword id="KW-0862">Zinc</keyword>
<protein>
    <recommendedName>
        <fullName evidence="1">Adenosine deaminase</fullName>
        <ecNumber evidence="1">3.5.4.4</ecNumber>
    </recommendedName>
    <alternativeName>
        <fullName evidence="1">Adenosine aminohydrolase</fullName>
    </alternativeName>
</protein>